<gene>
    <name evidence="1" type="primary">rps19</name>
    <name type="ordered locus">Grc000097</name>
</gene>
<accession>Q6B8V7</accession>
<feature type="chain" id="PRO_0000129964" description="Small ribosomal subunit protein uS19c">
    <location>
        <begin position="1"/>
        <end position="92"/>
    </location>
</feature>
<comment type="function">
    <text evidence="1">Protein S19 forms a complex with S13 that binds strongly to the 16S ribosomal RNA.</text>
</comment>
<comment type="subcellular location">
    <subcellularLocation>
        <location>Plastid</location>
        <location>Chloroplast</location>
    </subcellularLocation>
</comment>
<comment type="similarity">
    <text evidence="1">Belongs to the universal ribosomal protein uS19 family.</text>
</comment>
<geneLocation type="chloroplast"/>
<name>RR19_GRATL</name>
<dbReference type="EMBL" id="AY673996">
    <property type="protein sequence ID" value="AAT79678.1"/>
    <property type="molecule type" value="Genomic_DNA"/>
</dbReference>
<dbReference type="RefSeq" id="YP_063603.1">
    <property type="nucleotide sequence ID" value="NC_006137.1"/>
</dbReference>
<dbReference type="SMR" id="Q6B8V7"/>
<dbReference type="GeneID" id="2943961"/>
<dbReference type="GO" id="GO:0009507">
    <property type="term" value="C:chloroplast"/>
    <property type="evidence" value="ECO:0007669"/>
    <property type="project" value="UniProtKB-SubCell"/>
</dbReference>
<dbReference type="GO" id="GO:0005763">
    <property type="term" value="C:mitochondrial small ribosomal subunit"/>
    <property type="evidence" value="ECO:0007669"/>
    <property type="project" value="TreeGrafter"/>
</dbReference>
<dbReference type="GO" id="GO:0019843">
    <property type="term" value="F:rRNA binding"/>
    <property type="evidence" value="ECO:0007669"/>
    <property type="project" value="UniProtKB-UniRule"/>
</dbReference>
<dbReference type="GO" id="GO:0003735">
    <property type="term" value="F:structural constituent of ribosome"/>
    <property type="evidence" value="ECO:0007669"/>
    <property type="project" value="InterPro"/>
</dbReference>
<dbReference type="GO" id="GO:0000028">
    <property type="term" value="P:ribosomal small subunit assembly"/>
    <property type="evidence" value="ECO:0007669"/>
    <property type="project" value="TreeGrafter"/>
</dbReference>
<dbReference type="GO" id="GO:0006412">
    <property type="term" value="P:translation"/>
    <property type="evidence" value="ECO:0007669"/>
    <property type="project" value="UniProtKB-UniRule"/>
</dbReference>
<dbReference type="FunFam" id="3.30.860.10:FF:000001">
    <property type="entry name" value="30S ribosomal protein S19"/>
    <property type="match status" value="1"/>
</dbReference>
<dbReference type="Gene3D" id="3.30.860.10">
    <property type="entry name" value="30s Ribosomal Protein S19, Chain A"/>
    <property type="match status" value="1"/>
</dbReference>
<dbReference type="HAMAP" id="MF_00531">
    <property type="entry name" value="Ribosomal_uS19"/>
    <property type="match status" value="1"/>
</dbReference>
<dbReference type="InterPro" id="IPR002222">
    <property type="entry name" value="Ribosomal_uS19"/>
</dbReference>
<dbReference type="InterPro" id="IPR005732">
    <property type="entry name" value="Ribosomal_uS19_bac-type"/>
</dbReference>
<dbReference type="InterPro" id="IPR020934">
    <property type="entry name" value="Ribosomal_uS19_CS"/>
</dbReference>
<dbReference type="InterPro" id="IPR023575">
    <property type="entry name" value="Ribosomal_uS19_SF"/>
</dbReference>
<dbReference type="NCBIfam" id="TIGR01050">
    <property type="entry name" value="rpsS_bact"/>
    <property type="match status" value="1"/>
</dbReference>
<dbReference type="PANTHER" id="PTHR11880">
    <property type="entry name" value="RIBOSOMAL PROTEIN S19P FAMILY MEMBER"/>
    <property type="match status" value="1"/>
</dbReference>
<dbReference type="PANTHER" id="PTHR11880:SF8">
    <property type="entry name" value="SMALL RIBOSOMAL SUBUNIT PROTEIN US19M"/>
    <property type="match status" value="1"/>
</dbReference>
<dbReference type="Pfam" id="PF00203">
    <property type="entry name" value="Ribosomal_S19"/>
    <property type="match status" value="1"/>
</dbReference>
<dbReference type="PIRSF" id="PIRSF002144">
    <property type="entry name" value="Ribosomal_S19"/>
    <property type="match status" value="1"/>
</dbReference>
<dbReference type="PRINTS" id="PR00975">
    <property type="entry name" value="RIBOSOMALS19"/>
</dbReference>
<dbReference type="SUPFAM" id="SSF54570">
    <property type="entry name" value="Ribosomal protein S19"/>
    <property type="match status" value="1"/>
</dbReference>
<dbReference type="PROSITE" id="PS00323">
    <property type="entry name" value="RIBOSOMAL_S19"/>
    <property type="match status" value="1"/>
</dbReference>
<protein>
    <recommendedName>
        <fullName evidence="1">Small ribosomal subunit protein uS19c</fullName>
    </recommendedName>
    <alternativeName>
        <fullName evidence="2">30S ribosomal protein S19, chloroplastic</fullName>
    </alternativeName>
</protein>
<keyword id="KW-0150">Chloroplast</keyword>
<keyword id="KW-0934">Plastid</keyword>
<keyword id="KW-0687">Ribonucleoprotein</keyword>
<keyword id="KW-0689">Ribosomal protein</keyword>
<keyword id="KW-0694">RNA-binding</keyword>
<keyword id="KW-0699">rRNA-binding</keyword>
<organism>
    <name type="scientific">Gracilaria tenuistipitata var. liui</name>
    <name type="common">Red alga</name>
    <dbReference type="NCBI Taxonomy" id="285951"/>
    <lineage>
        <taxon>Eukaryota</taxon>
        <taxon>Rhodophyta</taxon>
        <taxon>Florideophyceae</taxon>
        <taxon>Rhodymeniophycidae</taxon>
        <taxon>Gracilariales</taxon>
        <taxon>Gracilariaceae</taxon>
        <taxon>Gracilaria</taxon>
        <taxon>Gracilaria tenuistipitata</taxon>
    </lineage>
</organism>
<reference key="1">
    <citation type="journal article" date="2004" name="J. Mol. Evol.">
        <title>Comparative analysis of the complete plastid genome sequence of the red alga Gracilaria tenuistipitata var. liui provides insights into the evolution of rhodoplasts and their relationship to other plastids.</title>
        <authorList>
            <person name="Hagopian J.C."/>
            <person name="Reis M."/>
            <person name="Kitajima J.P."/>
            <person name="Bhattacharya D."/>
            <person name="de Oliveira M.C."/>
        </authorList>
    </citation>
    <scope>NUCLEOTIDE SEQUENCE [LARGE SCALE GENOMIC DNA]</scope>
</reference>
<evidence type="ECO:0000255" key="1">
    <source>
        <dbReference type="HAMAP-Rule" id="MF_00531"/>
    </source>
</evidence>
<evidence type="ECO:0000305" key="2"/>
<proteinExistence type="inferred from homology"/>
<sequence length="92" mass="10783">MSRSLKKGPYIEYKLLKKIEELNKQEAKKTLKTWSRSSTIIPQMIGHTIAVYNGKQFFPVFISDQMVGHKLGEFVPTRNFRSHVKSDRKTKR</sequence>